<name>FABA_ECOLU</name>
<feature type="chain" id="PRO_1000201183" description="3-hydroxydecanoyl-[acyl-carrier-protein] dehydratase">
    <location>
        <begin position="1"/>
        <end position="172"/>
    </location>
</feature>
<feature type="active site" evidence="1">
    <location>
        <position position="71"/>
    </location>
</feature>
<keyword id="KW-0963">Cytoplasm</keyword>
<keyword id="KW-0275">Fatty acid biosynthesis</keyword>
<keyword id="KW-0276">Fatty acid metabolism</keyword>
<keyword id="KW-0413">Isomerase</keyword>
<keyword id="KW-0444">Lipid biosynthesis</keyword>
<keyword id="KW-0443">Lipid metabolism</keyword>
<keyword id="KW-0456">Lyase</keyword>
<organism>
    <name type="scientific">Escherichia coli O17:K52:H18 (strain UMN026 / ExPEC)</name>
    <dbReference type="NCBI Taxonomy" id="585056"/>
    <lineage>
        <taxon>Bacteria</taxon>
        <taxon>Pseudomonadati</taxon>
        <taxon>Pseudomonadota</taxon>
        <taxon>Gammaproteobacteria</taxon>
        <taxon>Enterobacterales</taxon>
        <taxon>Enterobacteriaceae</taxon>
        <taxon>Escherichia</taxon>
    </lineage>
</organism>
<evidence type="ECO:0000255" key="1">
    <source>
        <dbReference type="HAMAP-Rule" id="MF_00405"/>
    </source>
</evidence>
<reference key="1">
    <citation type="journal article" date="2009" name="PLoS Genet.">
        <title>Organised genome dynamics in the Escherichia coli species results in highly diverse adaptive paths.</title>
        <authorList>
            <person name="Touchon M."/>
            <person name="Hoede C."/>
            <person name="Tenaillon O."/>
            <person name="Barbe V."/>
            <person name="Baeriswyl S."/>
            <person name="Bidet P."/>
            <person name="Bingen E."/>
            <person name="Bonacorsi S."/>
            <person name="Bouchier C."/>
            <person name="Bouvet O."/>
            <person name="Calteau A."/>
            <person name="Chiapello H."/>
            <person name="Clermont O."/>
            <person name="Cruveiller S."/>
            <person name="Danchin A."/>
            <person name="Diard M."/>
            <person name="Dossat C."/>
            <person name="Karoui M.E."/>
            <person name="Frapy E."/>
            <person name="Garry L."/>
            <person name="Ghigo J.M."/>
            <person name="Gilles A.M."/>
            <person name="Johnson J."/>
            <person name="Le Bouguenec C."/>
            <person name="Lescat M."/>
            <person name="Mangenot S."/>
            <person name="Martinez-Jehanne V."/>
            <person name="Matic I."/>
            <person name="Nassif X."/>
            <person name="Oztas S."/>
            <person name="Petit M.A."/>
            <person name="Pichon C."/>
            <person name="Rouy Z."/>
            <person name="Ruf C.S."/>
            <person name="Schneider D."/>
            <person name="Tourret J."/>
            <person name="Vacherie B."/>
            <person name="Vallenet D."/>
            <person name="Medigue C."/>
            <person name="Rocha E.P.C."/>
            <person name="Denamur E."/>
        </authorList>
    </citation>
    <scope>NUCLEOTIDE SEQUENCE [LARGE SCALE GENOMIC DNA]</scope>
    <source>
        <strain>UMN026 / ExPEC</strain>
    </source>
</reference>
<accession>B7N3B6</accession>
<gene>
    <name evidence="1" type="primary">fabA</name>
    <name type="ordered locus">ECUMN_1143</name>
</gene>
<dbReference type="EC" id="4.2.1.59" evidence="1"/>
<dbReference type="EC" id="5.3.3.14" evidence="1"/>
<dbReference type="EMBL" id="CU928163">
    <property type="protein sequence ID" value="CAR12352.1"/>
    <property type="molecule type" value="Genomic_DNA"/>
</dbReference>
<dbReference type="RefSeq" id="WP_000227927.1">
    <property type="nucleotide sequence ID" value="NC_011751.1"/>
</dbReference>
<dbReference type="RefSeq" id="YP_002411896.1">
    <property type="nucleotide sequence ID" value="NC_011751.1"/>
</dbReference>
<dbReference type="SMR" id="B7N3B6"/>
<dbReference type="STRING" id="585056.ECUMN_1143"/>
<dbReference type="GeneID" id="93776460"/>
<dbReference type="KEGG" id="eum:ECUMN_1143"/>
<dbReference type="PATRIC" id="fig|585056.7.peg.1340"/>
<dbReference type="HOGENOM" id="CLU_097925_0_0_6"/>
<dbReference type="UniPathway" id="UPA00094"/>
<dbReference type="Proteomes" id="UP000007097">
    <property type="component" value="Chromosome"/>
</dbReference>
<dbReference type="GO" id="GO:0005737">
    <property type="term" value="C:cytoplasm"/>
    <property type="evidence" value="ECO:0007669"/>
    <property type="project" value="UniProtKB-SubCell"/>
</dbReference>
<dbReference type="GO" id="GO:0019171">
    <property type="term" value="F:(3R)-hydroxyacyl-[acyl-carrier-protein] dehydratase activity"/>
    <property type="evidence" value="ECO:0007669"/>
    <property type="project" value="UniProtKB-UniRule"/>
</dbReference>
<dbReference type="GO" id="GO:0034017">
    <property type="term" value="F:trans-2-decenoyl-acyl-carrier-protein isomerase activity"/>
    <property type="evidence" value="ECO:0007669"/>
    <property type="project" value="UniProtKB-UniRule"/>
</dbReference>
<dbReference type="GO" id="GO:0006636">
    <property type="term" value="P:unsaturated fatty acid biosynthetic process"/>
    <property type="evidence" value="ECO:0007669"/>
    <property type="project" value="UniProtKB-UniRule"/>
</dbReference>
<dbReference type="CDD" id="cd01287">
    <property type="entry name" value="FabA"/>
    <property type="match status" value="1"/>
</dbReference>
<dbReference type="FunFam" id="3.10.129.10:FF:000003">
    <property type="entry name" value="3-hydroxydecanoyl-[acyl-carrier-protein] dehydratase"/>
    <property type="match status" value="1"/>
</dbReference>
<dbReference type="Gene3D" id="3.10.129.10">
    <property type="entry name" value="Hotdog Thioesterase"/>
    <property type="match status" value="1"/>
</dbReference>
<dbReference type="HAMAP" id="MF_00405">
    <property type="entry name" value="FabA"/>
    <property type="match status" value="1"/>
</dbReference>
<dbReference type="InterPro" id="IPR010083">
    <property type="entry name" value="FabA"/>
</dbReference>
<dbReference type="InterPro" id="IPR013114">
    <property type="entry name" value="FabA_FabZ"/>
</dbReference>
<dbReference type="InterPro" id="IPR029069">
    <property type="entry name" value="HotDog_dom_sf"/>
</dbReference>
<dbReference type="NCBIfam" id="TIGR01749">
    <property type="entry name" value="fabA"/>
    <property type="match status" value="1"/>
</dbReference>
<dbReference type="NCBIfam" id="NF003509">
    <property type="entry name" value="PRK05174.1"/>
    <property type="match status" value="1"/>
</dbReference>
<dbReference type="PANTHER" id="PTHR30272">
    <property type="entry name" value="3-HYDROXYACYL-[ACYL-CARRIER-PROTEIN] DEHYDRATASE"/>
    <property type="match status" value="1"/>
</dbReference>
<dbReference type="PANTHER" id="PTHR30272:SF8">
    <property type="entry name" value="3-HYDROXYDECANOYL-[ACYL-CARRIER-PROTEIN] DEHYDRATASE"/>
    <property type="match status" value="1"/>
</dbReference>
<dbReference type="Pfam" id="PF07977">
    <property type="entry name" value="FabA"/>
    <property type="match status" value="1"/>
</dbReference>
<dbReference type="SUPFAM" id="SSF54637">
    <property type="entry name" value="Thioesterase/thiol ester dehydrase-isomerase"/>
    <property type="match status" value="1"/>
</dbReference>
<protein>
    <recommendedName>
        <fullName evidence="1">3-hydroxydecanoyl-[acyl-carrier-protein] dehydratase</fullName>
        <ecNumber evidence="1">4.2.1.59</ecNumber>
    </recommendedName>
    <alternativeName>
        <fullName evidence="1">3-hydroxyacyl-[acyl-carrier-protein] dehydratase FabA</fullName>
    </alternativeName>
    <alternativeName>
        <fullName evidence="1">Beta-hydroxydecanoyl thioester dehydrase</fullName>
    </alternativeName>
    <alternativeName>
        <fullName evidence="1">Trans-2-decenoyl-[acyl-carrier-protein] isomerase</fullName>
        <ecNumber evidence="1">5.3.3.14</ecNumber>
    </alternativeName>
</protein>
<proteinExistence type="inferred from homology"/>
<sequence>MVDKRESYTKEDLLASGRGELFGAKGPQLPAPNMLMMDRVVKMTETGGNFDKGYVEAELDINPDLWFFGCHFIGDPVMPGCLGLDAMWQLVGFYLGWLGGEGKGRALGVGEVKFTGQVLPTAKKVTYRIHFKRIVNRRLIMGLADGEVLVDGRLIYTASDLKVGLFQDTSAF</sequence>
<comment type="function">
    <text evidence="1">Necessary for the introduction of cis unsaturation into fatty acids. Catalyzes the dehydration of (3R)-3-hydroxydecanoyl-ACP to E-(2)-decenoyl-ACP and then its isomerization to Z-(3)-decenoyl-ACP. Can catalyze the dehydratase reaction for beta-hydroxyacyl-ACPs with saturated chain lengths up to 16:0, being most active on intermediate chain length.</text>
</comment>
<comment type="catalytic activity">
    <reaction evidence="1">
        <text>a (3R)-hydroxyacyl-[ACP] = a (2E)-enoyl-[ACP] + H2O</text>
        <dbReference type="Rhea" id="RHEA:13097"/>
        <dbReference type="Rhea" id="RHEA-COMP:9925"/>
        <dbReference type="Rhea" id="RHEA-COMP:9945"/>
        <dbReference type="ChEBI" id="CHEBI:15377"/>
        <dbReference type="ChEBI" id="CHEBI:78784"/>
        <dbReference type="ChEBI" id="CHEBI:78827"/>
        <dbReference type="EC" id="4.2.1.59"/>
    </reaction>
</comment>
<comment type="catalytic activity">
    <reaction evidence="1">
        <text>(3R)-hydroxydecanoyl-[ACP] = (2E)-decenoyl-[ACP] + H2O</text>
        <dbReference type="Rhea" id="RHEA:41860"/>
        <dbReference type="Rhea" id="RHEA-COMP:9638"/>
        <dbReference type="Rhea" id="RHEA-COMP:9639"/>
        <dbReference type="ChEBI" id="CHEBI:15377"/>
        <dbReference type="ChEBI" id="CHEBI:78466"/>
        <dbReference type="ChEBI" id="CHEBI:78467"/>
    </reaction>
</comment>
<comment type="catalytic activity">
    <reaction evidence="1">
        <text>(2E)-decenoyl-[ACP] = (3Z)-decenoyl-[ACP]</text>
        <dbReference type="Rhea" id="RHEA:23568"/>
        <dbReference type="Rhea" id="RHEA-COMP:9639"/>
        <dbReference type="Rhea" id="RHEA-COMP:9927"/>
        <dbReference type="ChEBI" id="CHEBI:78467"/>
        <dbReference type="ChEBI" id="CHEBI:78798"/>
        <dbReference type="EC" id="5.3.3.14"/>
    </reaction>
</comment>
<comment type="pathway">
    <text evidence="1">Lipid metabolism; fatty acid biosynthesis.</text>
</comment>
<comment type="subunit">
    <text evidence="1">Homodimer.</text>
</comment>
<comment type="subcellular location">
    <subcellularLocation>
        <location evidence="1">Cytoplasm</location>
    </subcellularLocation>
</comment>
<comment type="similarity">
    <text evidence="1">Belongs to the thioester dehydratase family. FabA subfamily.</text>
</comment>